<dbReference type="EMBL" id="U46667">
    <property type="protein sequence ID" value="AAC28949.1"/>
    <property type="molecule type" value="Genomic_DNA"/>
</dbReference>
<dbReference type="EMBL" id="U82598">
    <property type="protein sequence ID" value="AAB40817.1"/>
    <property type="molecule type" value="Genomic_DNA"/>
</dbReference>
<dbReference type="EMBL" id="U00096">
    <property type="protein sequence ID" value="AAC73718.1"/>
    <property type="molecule type" value="Genomic_DNA"/>
</dbReference>
<dbReference type="EMBL" id="AP009048">
    <property type="protein sequence ID" value="BAA35253.1"/>
    <property type="molecule type" value="Genomic_DNA"/>
</dbReference>
<dbReference type="PIR" id="G64795">
    <property type="entry name" value="G64795"/>
</dbReference>
<dbReference type="RefSeq" id="NP_415150.1">
    <property type="nucleotide sequence ID" value="NC_000913.3"/>
</dbReference>
<dbReference type="RefSeq" id="WP_000700703.1">
    <property type="nucleotide sequence ID" value="NZ_STEB01000031.1"/>
</dbReference>
<dbReference type="SMR" id="P69330"/>
<dbReference type="BioGRID" id="4259652">
    <property type="interactions" value="13"/>
</dbReference>
<dbReference type="ComplexPortal" id="CPX-4781">
    <property type="entry name" value="Citrate lyase complex"/>
</dbReference>
<dbReference type="FunCoup" id="P69330">
    <property type="interactions" value="271"/>
</dbReference>
<dbReference type="IntAct" id="P69330">
    <property type="interactions" value="3"/>
</dbReference>
<dbReference type="STRING" id="511145.b0617"/>
<dbReference type="PaxDb" id="511145-b0617"/>
<dbReference type="EnsemblBacteria" id="AAC73718">
    <property type="protein sequence ID" value="AAC73718"/>
    <property type="gene ID" value="b0617"/>
</dbReference>
<dbReference type="GeneID" id="93776868"/>
<dbReference type="GeneID" id="945415"/>
<dbReference type="KEGG" id="ecj:JW0609"/>
<dbReference type="KEGG" id="eco:b0617"/>
<dbReference type="KEGG" id="ecoc:C3026_03085"/>
<dbReference type="PATRIC" id="fig|1411691.4.peg.1651"/>
<dbReference type="EchoBASE" id="EB3313"/>
<dbReference type="eggNOG" id="COG3052">
    <property type="taxonomic scope" value="Bacteria"/>
</dbReference>
<dbReference type="HOGENOM" id="CLU_158489_0_0_6"/>
<dbReference type="InParanoid" id="P69330"/>
<dbReference type="OMA" id="YNWKEID"/>
<dbReference type="OrthoDB" id="9798736at2"/>
<dbReference type="PhylomeDB" id="P69330"/>
<dbReference type="BioCyc" id="EcoCyc:ACPSUB-MONOMER"/>
<dbReference type="BioCyc" id="MetaCyc:ACPSUB-MONOMER"/>
<dbReference type="PRO" id="PR:P69330"/>
<dbReference type="Proteomes" id="UP000000625">
    <property type="component" value="Chromosome"/>
</dbReference>
<dbReference type="GO" id="GO:0009346">
    <property type="term" value="C:ATP-independent citrate lyase complex"/>
    <property type="evidence" value="ECO:0000353"/>
    <property type="project" value="ComplexPortal"/>
</dbReference>
<dbReference type="GO" id="GO:0005737">
    <property type="term" value="C:cytoplasm"/>
    <property type="evidence" value="ECO:0007669"/>
    <property type="project" value="UniProtKB-SubCell"/>
</dbReference>
<dbReference type="GO" id="GO:0051192">
    <property type="term" value="F:prosthetic group binding"/>
    <property type="evidence" value="ECO:0000314"/>
    <property type="project" value="EcoCyc"/>
</dbReference>
<dbReference type="GO" id="GO:0006084">
    <property type="term" value="P:acetyl-CoA metabolic process"/>
    <property type="evidence" value="ECO:0000314"/>
    <property type="project" value="ComplexPortal"/>
</dbReference>
<dbReference type="GO" id="GO:0006101">
    <property type="term" value="P:citrate metabolic process"/>
    <property type="evidence" value="ECO:0000314"/>
    <property type="project" value="ComplexPortal"/>
</dbReference>
<dbReference type="HAMAP" id="MF_00805">
    <property type="entry name" value="CitD"/>
    <property type="match status" value="1"/>
</dbReference>
<dbReference type="InterPro" id="IPR006495">
    <property type="entry name" value="CitD"/>
</dbReference>
<dbReference type="InterPro" id="IPR023439">
    <property type="entry name" value="Mal_deCO2ase/Cit_lyase_ACP"/>
</dbReference>
<dbReference type="NCBIfam" id="TIGR01608">
    <property type="entry name" value="citD"/>
    <property type="match status" value="1"/>
</dbReference>
<dbReference type="NCBIfam" id="NF009726">
    <property type="entry name" value="PRK13253.1"/>
    <property type="match status" value="1"/>
</dbReference>
<dbReference type="Pfam" id="PF06857">
    <property type="entry name" value="ACP"/>
    <property type="match status" value="1"/>
</dbReference>
<dbReference type="PIRSF" id="PIRSF002736">
    <property type="entry name" value="Citrt_lyas_gamma"/>
    <property type="match status" value="1"/>
</dbReference>
<keyword id="KW-0963">Cytoplasm</keyword>
<keyword id="KW-0597">Phosphoprotein</keyword>
<keyword id="KW-1185">Reference proteome</keyword>
<reference key="1">
    <citation type="submission" date="1996-01" db="EMBL/GenBank/DDBJ databases">
        <authorList>
            <person name="Ingmer H."/>
            <person name="Cohen S.N."/>
        </authorList>
    </citation>
    <scope>NUCLEOTIDE SEQUENCE [GENOMIC DNA]</scope>
    <source>
        <strain>K12 / MG1655 / ATCC 47076</strain>
    </source>
</reference>
<reference key="2">
    <citation type="journal article" date="1996" name="DNA Res.">
        <title>A 718-kb DNA sequence of the Escherichia coli K-12 genome corresponding to the 12.7-28.0 min region on the linkage map.</title>
        <authorList>
            <person name="Oshima T."/>
            <person name="Aiba H."/>
            <person name="Baba T."/>
            <person name="Fujita K."/>
            <person name="Hayashi K."/>
            <person name="Honjo A."/>
            <person name="Ikemoto K."/>
            <person name="Inada T."/>
            <person name="Itoh T."/>
            <person name="Kajihara M."/>
            <person name="Kanai K."/>
            <person name="Kashimoto K."/>
            <person name="Kimura S."/>
            <person name="Kitagawa M."/>
            <person name="Makino K."/>
            <person name="Masuda S."/>
            <person name="Miki T."/>
            <person name="Mizobuchi K."/>
            <person name="Mori H."/>
            <person name="Motomura K."/>
            <person name="Nakamura Y."/>
            <person name="Nashimoto H."/>
            <person name="Nishio Y."/>
            <person name="Saito N."/>
            <person name="Sampei G."/>
            <person name="Seki Y."/>
            <person name="Tagami H."/>
            <person name="Takemoto K."/>
            <person name="Wada C."/>
            <person name="Yamamoto Y."/>
            <person name="Yano M."/>
            <person name="Horiuchi T."/>
        </authorList>
    </citation>
    <scope>NUCLEOTIDE SEQUENCE [LARGE SCALE GENOMIC DNA]</scope>
    <source>
        <strain>K12 / W3110 / ATCC 27325 / DSM 5911</strain>
    </source>
</reference>
<reference key="3">
    <citation type="submission" date="1997-01" db="EMBL/GenBank/DDBJ databases">
        <title>Sequence of minutes 4-25 of Escherichia coli.</title>
        <authorList>
            <person name="Chung E."/>
            <person name="Allen E."/>
            <person name="Araujo R."/>
            <person name="Aparicio A.M."/>
            <person name="Davis K."/>
            <person name="Duncan M."/>
            <person name="Federspiel N."/>
            <person name="Hyman R."/>
            <person name="Kalman S."/>
            <person name="Komp C."/>
            <person name="Kurdi O."/>
            <person name="Lew H."/>
            <person name="Lin D."/>
            <person name="Namath A."/>
            <person name="Oefner P."/>
            <person name="Roberts D."/>
            <person name="Schramm S."/>
            <person name="Davis R.W."/>
        </authorList>
    </citation>
    <scope>NUCLEOTIDE SEQUENCE [LARGE SCALE GENOMIC DNA]</scope>
    <source>
        <strain>K12 / MG1655 / ATCC 47076</strain>
    </source>
</reference>
<reference key="4">
    <citation type="journal article" date="1997" name="Science">
        <title>The complete genome sequence of Escherichia coli K-12.</title>
        <authorList>
            <person name="Blattner F.R."/>
            <person name="Plunkett G. III"/>
            <person name="Bloch C.A."/>
            <person name="Perna N.T."/>
            <person name="Burland V."/>
            <person name="Riley M."/>
            <person name="Collado-Vides J."/>
            <person name="Glasner J.D."/>
            <person name="Rode C.K."/>
            <person name="Mayhew G.F."/>
            <person name="Gregor J."/>
            <person name="Davis N.W."/>
            <person name="Kirkpatrick H.A."/>
            <person name="Goeden M.A."/>
            <person name="Rose D.J."/>
            <person name="Mau B."/>
            <person name="Shao Y."/>
        </authorList>
    </citation>
    <scope>NUCLEOTIDE SEQUENCE [LARGE SCALE GENOMIC DNA]</scope>
    <source>
        <strain>K12 / MG1655 / ATCC 47076</strain>
    </source>
</reference>
<reference key="5">
    <citation type="journal article" date="2006" name="Mol. Syst. Biol.">
        <title>Highly accurate genome sequences of Escherichia coli K-12 strains MG1655 and W3110.</title>
        <authorList>
            <person name="Hayashi K."/>
            <person name="Morooka N."/>
            <person name="Yamamoto Y."/>
            <person name="Fujita K."/>
            <person name="Isono K."/>
            <person name="Choi S."/>
            <person name="Ohtsubo E."/>
            <person name="Baba T."/>
            <person name="Wanner B.L."/>
            <person name="Mori H."/>
            <person name="Horiuchi T."/>
        </authorList>
    </citation>
    <scope>NUCLEOTIDE SEQUENCE [LARGE SCALE GENOMIC DNA]</scope>
    <source>
        <strain>K12 / W3110 / ATCC 27325 / DSM 5911</strain>
    </source>
</reference>
<reference key="6">
    <citation type="journal article" date="2009" name="J. Bacteriol.">
        <title>Involvement of the leucine response transcription factor LeuO in regulation of the genes for sulfa drug efflux.</title>
        <authorList>
            <person name="Shimada T."/>
            <person name="Yamamoto K."/>
            <person name="Ishihama A."/>
        </authorList>
    </citation>
    <scope>OPERON STRUCTURE</scope>
    <scope>INDUCTION</scope>
    <source>
        <strain>K12 / BW25113</strain>
    </source>
</reference>
<comment type="function">
    <text>Covalent carrier of the coenzyme of citrate lyase.</text>
</comment>
<comment type="subunit">
    <text evidence="1">Oligomer with a subunit composition of (alpha,beta,gamma)6.</text>
</comment>
<comment type="subcellular location">
    <subcellularLocation>
        <location>Cytoplasm</location>
    </subcellularLocation>
</comment>
<comment type="induction">
    <text evidence="2">Repressed by H-NS. Part of the citCDEFXG operon.</text>
</comment>
<comment type="similarity">
    <text evidence="3">Belongs to the CitD family.</text>
</comment>
<protein>
    <recommendedName>
        <fullName>Citrate lyase acyl carrier protein</fullName>
    </recommendedName>
    <alternativeName>
        <fullName>Citrate lyase gamma chain</fullName>
    </alternativeName>
</protein>
<gene>
    <name type="primary">citD</name>
    <name type="synonym">ybdX</name>
    <name type="ordered locus">b0617</name>
    <name type="ordered locus">JW0609</name>
</gene>
<name>CITD_ECOLI</name>
<proteinExistence type="evidence at transcript level"/>
<feature type="chain" id="PRO_0000214695" description="Citrate lyase acyl carrier protein">
    <location>
        <begin position="1"/>
        <end position="98"/>
    </location>
</feature>
<feature type="modified residue" description="O-(phosphoribosyl dephospho-coenzyme A)serine" evidence="1">
    <location>
        <position position="14"/>
    </location>
</feature>
<feature type="sequence conflict" description="In Ref. 2." evidence="3" ref="2">
    <original>PWEDCQ</original>
    <variation>HGRIANDFRFAATT</variation>
    <location>
        <begin position="93"/>
        <end position="98"/>
    </location>
</feature>
<sequence>MKINQPAVAGTLESGDVMIRIAPLDTQDIDLQINSSVEKQFGDAIRTTILDVLARYNVRGVQLNVDDKGALDCILRARLEALLARASGIPALPWEDCQ</sequence>
<evidence type="ECO:0000250" key="1"/>
<evidence type="ECO:0000269" key="2">
    <source>
    </source>
</evidence>
<evidence type="ECO:0000305" key="3"/>
<organism>
    <name type="scientific">Escherichia coli (strain K12)</name>
    <dbReference type="NCBI Taxonomy" id="83333"/>
    <lineage>
        <taxon>Bacteria</taxon>
        <taxon>Pseudomonadati</taxon>
        <taxon>Pseudomonadota</taxon>
        <taxon>Gammaproteobacteria</taxon>
        <taxon>Enterobacterales</taxon>
        <taxon>Enterobacteriaceae</taxon>
        <taxon>Escherichia</taxon>
    </lineage>
</organism>
<accession>P69330</accession>
<accession>O54336</accession>
<accession>P77618</accession>